<protein>
    <recommendedName>
        <fullName evidence="1">Small ribosomal subunit protein uS5</fullName>
    </recommendedName>
    <alternativeName>
        <fullName evidence="3">30S ribosomal protein S5</fullName>
    </alternativeName>
</protein>
<reference key="1">
    <citation type="journal article" date="2008" name="BMC Genomics">
        <title>Comparative genomic analysis of the gut bacterium Bifidobacterium longum reveals loci susceptible to deletion during pure culture growth.</title>
        <authorList>
            <person name="Lee J.H."/>
            <person name="Karamychev V.N."/>
            <person name="Kozyavkin S.A."/>
            <person name="Mills D."/>
            <person name="Pavlov A.R."/>
            <person name="Pavlova N.V."/>
            <person name="Polouchine N.N."/>
            <person name="Richardson P.M."/>
            <person name="Shakhova V.V."/>
            <person name="Slesarev A.I."/>
            <person name="Weimer B."/>
            <person name="O'Sullivan D.J."/>
        </authorList>
    </citation>
    <scope>NUCLEOTIDE SEQUENCE [LARGE SCALE GENOMIC DNA]</scope>
    <source>
        <strain>DJO10A</strain>
    </source>
</reference>
<organism>
    <name type="scientific">Bifidobacterium longum (strain DJO10A)</name>
    <dbReference type="NCBI Taxonomy" id="205913"/>
    <lineage>
        <taxon>Bacteria</taxon>
        <taxon>Bacillati</taxon>
        <taxon>Actinomycetota</taxon>
        <taxon>Actinomycetes</taxon>
        <taxon>Bifidobacteriales</taxon>
        <taxon>Bifidobacteriaceae</taxon>
        <taxon>Bifidobacterium</taxon>
    </lineage>
</organism>
<keyword id="KW-0687">Ribonucleoprotein</keyword>
<keyword id="KW-0689">Ribosomal protein</keyword>
<keyword id="KW-0694">RNA-binding</keyword>
<keyword id="KW-0699">rRNA-binding</keyword>
<sequence>MSDNETKETQVAEETQNTVATESNNEDRKGRRGQRGEGRRGERRNRREENHGDELLDRVVTINRVSKTHKGGRTFSFAALVVVGDGNGTVGVGYGKSREVPAAIAKGQLDAKKHMFSVPRVRGTITHPVQGHDAAGTVLLRPAAPGTGVIAGGSVRAVMECAGITDVLTKSMGSATAVNVVRATVDALKQLEEPEEIAARRGLALDEVAPDALLRARAAGIAEARKAREEAAAAKAAEEKDGE</sequence>
<evidence type="ECO:0000255" key="1">
    <source>
        <dbReference type="HAMAP-Rule" id="MF_01307"/>
    </source>
</evidence>
<evidence type="ECO:0000256" key="2">
    <source>
        <dbReference type="SAM" id="MobiDB-lite"/>
    </source>
</evidence>
<evidence type="ECO:0000305" key="3"/>
<dbReference type="EMBL" id="CP000605">
    <property type="protein sequence ID" value="ACD99169.1"/>
    <property type="molecule type" value="Genomic_DNA"/>
</dbReference>
<dbReference type="RefSeq" id="WP_007053804.1">
    <property type="nucleotide sequence ID" value="NZ_AABM02000025.1"/>
</dbReference>
<dbReference type="SMR" id="B3DQD1"/>
<dbReference type="GeneID" id="69578880"/>
<dbReference type="KEGG" id="blj:BLD_1724"/>
<dbReference type="HOGENOM" id="CLU_065898_1_1_11"/>
<dbReference type="Proteomes" id="UP000002419">
    <property type="component" value="Chromosome"/>
</dbReference>
<dbReference type="GO" id="GO:0015935">
    <property type="term" value="C:small ribosomal subunit"/>
    <property type="evidence" value="ECO:0007669"/>
    <property type="project" value="InterPro"/>
</dbReference>
<dbReference type="GO" id="GO:0019843">
    <property type="term" value="F:rRNA binding"/>
    <property type="evidence" value="ECO:0007669"/>
    <property type="project" value="UniProtKB-UniRule"/>
</dbReference>
<dbReference type="GO" id="GO:0003735">
    <property type="term" value="F:structural constituent of ribosome"/>
    <property type="evidence" value="ECO:0007669"/>
    <property type="project" value="InterPro"/>
</dbReference>
<dbReference type="GO" id="GO:0006412">
    <property type="term" value="P:translation"/>
    <property type="evidence" value="ECO:0007669"/>
    <property type="project" value="UniProtKB-UniRule"/>
</dbReference>
<dbReference type="FunFam" id="3.30.160.20:FF:000001">
    <property type="entry name" value="30S ribosomal protein S5"/>
    <property type="match status" value="1"/>
</dbReference>
<dbReference type="FunFam" id="3.30.230.10:FF:000002">
    <property type="entry name" value="30S ribosomal protein S5"/>
    <property type="match status" value="1"/>
</dbReference>
<dbReference type="Gene3D" id="3.30.160.20">
    <property type="match status" value="1"/>
</dbReference>
<dbReference type="Gene3D" id="3.30.230.10">
    <property type="match status" value="1"/>
</dbReference>
<dbReference type="HAMAP" id="MF_01307_B">
    <property type="entry name" value="Ribosomal_uS5_B"/>
    <property type="match status" value="1"/>
</dbReference>
<dbReference type="InterPro" id="IPR020568">
    <property type="entry name" value="Ribosomal_Su5_D2-typ_SF"/>
</dbReference>
<dbReference type="InterPro" id="IPR000851">
    <property type="entry name" value="Ribosomal_uS5"/>
</dbReference>
<dbReference type="InterPro" id="IPR005712">
    <property type="entry name" value="Ribosomal_uS5_bac-type"/>
</dbReference>
<dbReference type="InterPro" id="IPR005324">
    <property type="entry name" value="Ribosomal_uS5_C"/>
</dbReference>
<dbReference type="InterPro" id="IPR013810">
    <property type="entry name" value="Ribosomal_uS5_N"/>
</dbReference>
<dbReference type="InterPro" id="IPR018192">
    <property type="entry name" value="Ribosomal_uS5_N_CS"/>
</dbReference>
<dbReference type="InterPro" id="IPR014721">
    <property type="entry name" value="Ribsml_uS5_D2-typ_fold_subgr"/>
</dbReference>
<dbReference type="NCBIfam" id="TIGR01021">
    <property type="entry name" value="rpsE_bact"/>
    <property type="match status" value="1"/>
</dbReference>
<dbReference type="PANTHER" id="PTHR48277">
    <property type="entry name" value="MITOCHONDRIAL RIBOSOMAL PROTEIN S5"/>
    <property type="match status" value="1"/>
</dbReference>
<dbReference type="PANTHER" id="PTHR48277:SF1">
    <property type="entry name" value="MITOCHONDRIAL RIBOSOMAL PROTEIN S5"/>
    <property type="match status" value="1"/>
</dbReference>
<dbReference type="Pfam" id="PF00333">
    <property type="entry name" value="Ribosomal_S5"/>
    <property type="match status" value="1"/>
</dbReference>
<dbReference type="Pfam" id="PF03719">
    <property type="entry name" value="Ribosomal_S5_C"/>
    <property type="match status" value="1"/>
</dbReference>
<dbReference type="SUPFAM" id="SSF54768">
    <property type="entry name" value="dsRNA-binding domain-like"/>
    <property type="match status" value="1"/>
</dbReference>
<dbReference type="SUPFAM" id="SSF54211">
    <property type="entry name" value="Ribosomal protein S5 domain 2-like"/>
    <property type="match status" value="1"/>
</dbReference>
<dbReference type="PROSITE" id="PS00585">
    <property type="entry name" value="RIBOSOMAL_S5"/>
    <property type="match status" value="1"/>
</dbReference>
<dbReference type="PROSITE" id="PS50881">
    <property type="entry name" value="S5_DSRBD"/>
    <property type="match status" value="1"/>
</dbReference>
<comment type="function">
    <text evidence="1">With S4 and S12 plays an important role in translational accuracy.</text>
</comment>
<comment type="function">
    <text evidence="1">Located at the back of the 30S subunit body where it stabilizes the conformation of the head with respect to the body.</text>
</comment>
<comment type="subunit">
    <text evidence="1">Part of the 30S ribosomal subunit. Contacts proteins S4 and S8.</text>
</comment>
<comment type="domain">
    <text>The N-terminal domain interacts with the head of the 30S subunit; the C-terminal domain interacts with the body and contacts protein S4. The interaction surface between S4 and S5 is involved in control of translational fidelity.</text>
</comment>
<comment type="similarity">
    <text evidence="1">Belongs to the universal ribosomal protein uS5 family.</text>
</comment>
<feature type="chain" id="PRO_1000140837" description="Small ribosomal subunit protein uS5">
    <location>
        <begin position="1"/>
        <end position="243"/>
    </location>
</feature>
<feature type="domain" description="S5 DRBM" evidence="1">
    <location>
        <begin position="55"/>
        <end position="118"/>
    </location>
</feature>
<feature type="region of interest" description="Disordered" evidence="2">
    <location>
        <begin position="1"/>
        <end position="50"/>
    </location>
</feature>
<feature type="compositionally biased region" description="Basic and acidic residues" evidence="2">
    <location>
        <begin position="1"/>
        <end position="10"/>
    </location>
</feature>
<feature type="compositionally biased region" description="Polar residues" evidence="2">
    <location>
        <begin position="12"/>
        <end position="23"/>
    </location>
</feature>
<feature type="compositionally biased region" description="Basic and acidic residues" evidence="2">
    <location>
        <begin position="25"/>
        <end position="50"/>
    </location>
</feature>
<accession>B3DQD1</accession>
<proteinExistence type="inferred from homology"/>
<name>RS5_BIFLD</name>
<gene>
    <name evidence="1" type="primary">rpsE</name>
    <name type="ordered locus">BLD_1724</name>
</gene>